<proteinExistence type="inferred from homology"/>
<gene>
    <name type="ordered locus">MJ0876</name>
</gene>
<comment type="function">
    <text>Probably part of a binding-protein-dependent transport system. Probably responsible for the translocation of the substrate across the membrane.</text>
</comment>
<comment type="subcellular location">
    <subcellularLocation>
        <location evidence="2">Cell membrane</location>
        <topology evidence="2">Multi-pass membrane protein</topology>
    </subcellularLocation>
</comment>
<comment type="similarity">
    <text evidence="2">Belongs to the binding-protein-dependent transport system permease family. FecCD subfamily.</text>
</comment>
<reference key="1">
    <citation type="journal article" date="1996" name="Science">
        <title>Complete genome sequence of the methanogenic archaeon, Methanococcus jannaschii.</title>
        <authorList>
            <person name="Bult C.J."/>
            <person name="White O."/>
            <person name="Olsen G.J."/>
            <person name="Zhou L."/>
            <person name="Fleischmann R.D."/>
            <person name="Sutton G.G."/>
            <person name="Blake J.A."/>
            <person name="FitzGerald L.M."/>
            <person name="Clayton R.A."/>
            <person name="Gocayne J.D."/>
            <person name="Kerlavage A.R."/>
            <person name="Dougherty B.A."/>
            <person name="Tomb J.-F."/>
            <person name="Adams M.D."/>
            <person name="Reich C.I."/>
            <person name="Overbeek R."/>
            <person name="Kirkness E.F."/>
            <person name="Weinstock K.G."/>
            <person name="Merrick J.M."/>
            <person name="Glodek A."/>
            <person name="Scott J.L."/>
            <person name="Geoghagen N.S.M."/>
            <person name="Weidman J.F."/>
            <person name="Fuhrmann J.L."/>
            <person name="Nguyen D."/>
            <person name="Utterback T.R."/>
            <person name="Kelley J.M."/>
            <person name="Peterson J.D."/>
            <person name="Sadow P.W."/>
            <person name="Hanna M.C."/>
            <person name="Cotton M.D."/>
            <person name="Roberts K.M."/>
            <person name="Hurst M.A."/>
            <person name="Kaine B.P."/>
            <person name="Borodovsky M."/>
            <person name="Klenk H.-P."/>
            <person name="Fraser C.M."/>
            <person name="Smith H.O."/>
            <person name="Woese C.R."/>
            <person name="Venter J.C."/>
        </authorList>
    </citation>
    <scope>NUCLEOTIDE SEQUENCE [LARGE SCALE GENOMIC DNA]</scope>
    <source>
        <strain>ATCC 43067 / DSM 2661 / JAL-1 / JCM 10045 / NBRC 100440</strain>
    </source>
</reference>
<organism>
    <name type="scientific">Methanocaldococcus jannaschii (strain ATCC 43067 / DSM 2661 / JAL-1 / JCM 10045 / NBRC 100440)</name>
    <name type="common">Methanococcus jannaschii</name>
    <dbReference type="NCBI Taxonomy" id="243232"/>
    <lineage>
        <taxon>Archaea</taxon>
        <taxon>Methanobacteriati</taxon>
        <taxon>Methanobacteriota</taxon>
        <taxon>Methanomada group</taxon>
        <taxon>Methanococci</taxon>
        <taxon>Methanococcales</taxon>
        <taxon>Methanocaldococcaceae</taxon>
        <taxon>Methanocaldococcus</taxon>
    </lineage>
</organism>
<dbReference type="EMBL" id="L77117">
    <property type="protein sequence ID" value="AAB98879.1"/>
    <property type="molecule type" value="Genomic_DNA"/>
</dbReference>
<dbReference type="PIR" id="D64409">
    <property type="entry name" value="D64409"/>
</dbReference>
<dbReference type="RefSeq" id="WP_010870391.1">
    <property type="nucleotide sequence ID" value="NC_000909.1"/>
</dbReference>
<dbReference type="SMR" id="Q58286"/>
<dbReference type="STRING" id="243232.MJ_0876"/>
<dbReference type="PaxDb" id="243232-MJ_0876"/>
<dbReference type="EnsemblBacteria" id="AAB98879">
    <property type="protein sequence ID" value="AAB98879"/>
    <property type="gene ID" value="MJ_0876"/>
</dbReference>
<dbReference type="GeneID" id="1451765"/>
<dbReference type="KEGG" id="mja:MJ_0876"/>
<dbReference type="eggNOG" id="arCOG01007">
    <property type="taxonomic scope" value="Archaea"/>
</dbReference>
<dbReference type="HOGENOM" id="CLU_013016_0_0_2"/>
<dbReference type="InParanoid" id="Q58286"/>
<dbReference type="OrthoDB" id="27848at2157"/>
<dbReference type="PhylomeDB" id="Q58286"/>
<dbReference type="Proteomes" id="UP000000805">
    <property type="component" value="Chromosome"/>
</dbReference>
<dbReference type="GO" id="GO:0005886">
    <property type="term" value="C:plasma membrane"/>
    <property type="evidence" value="ECO:0000318"/>
    <property type="project" value="GO_Central"/>
</dbReference>
<dbReference type="GO" id="GO:0022857">
    <property type="term" value="F:transmembrane transporter activity"/>
    <property type="evidence" value="ECO:0000318"/>
    <property type="project" value="GO_Central"/>
</dbReference>
<dbReference type="GO" id="GO:0033214">
    <property type="term" value="P:siderophore-dependent iron import into cell"/>
    <property type="evidence" value="ECO:0000318"/>
    <property type="project" value="GO_Central"/>
</dbReference>
<dbReference type="CDD" id="cd06550">
    <property type="entry name" value="TM_ABC_iron-siderophores_like"/>
    <property type="match status" value="1"/>
</dbReference>
<dbReference type="Gene3D" id="1.10.3470.10">
    <property type="entry name" value="ABC transporter involved in vitamin B12 uptake, BtuC"/>
    <property type="match status" value="1"/>
</dbReference>
<dbReference type="InterPro" id="IPR037294">
    <property type="entry name" value="ABC_BtuC-like"/>
</dbReference>
<dbReference type="InterPro" id="IPR000522">
    <property type="entry name" value="ABC_transptr_permease_BtuC"/>
</dbReference>
<dbReference type="PANTHER" id="PTHR30472:SF25">
    <property type="entry name" value="ABC TRANSPORTER PERMEASE PROTEIN MJ0876-RELATED"/>
    <property type="match status" value="1"/>
</dbReference>
<dbReference type="PANTHER" id="PTHR30472">
    <property type="entry name" value="FERRIC ENTEROBACTIN TRANSPORT SYSTEM PERMEASE PROTEIN"/>
    <property type="match status" value="1"/>
</dbReference>
<dbReference type="Pfam" id="PF01032">
    <property type="entry name" value="FecCD"/>
    <property type="match status" value="1"/>
</dbReference>
<dbReference type="SUPFAM" id="SSF81345">
    <property type="entry name" value="ABC transporter involved in vitamin B12 uptake, BtuC"/>
    <property type="match status" value="1"/>
</dbReference>
<feature type="chain" id="PRO_0000060306" description="Putative ABC transporter permease protein MJ0876">
    <location>
        <begin position="1"/>
        <end position="351"/>
    </location>
</feature>
<feature type="transmembrane region" description="Helical" evidence="1">
    <location>
        <begin position="4"/>
        <end position="24"/>
    </location>
</feature>
<feature type="transmembrane region" description="Helical" evidence="1">
    <location>
        <begin position="59"/>
        <end position="79"/>
    </location>
</feature>
<feature type="transmembrane region" description="Helical" evidence="1">
    <location>
        <begin position="99"/>
        <end position="119"/>
    </location>
</feature>
<feature type="transmembrane region" description="Helical" evidence="1">
    <location>
        <begin position="124"/>
        <end position="144"/>
    </location>
</feature>
<feature type="transmembrane region" description="Helical" evidence="1">
    <location>
        <begin position="152"/>
        <end position="172"/>
    </location>
</feature>
<feature type="transmembrane region" description="Helical" evidence="1">
    <location>
        <begin position="196"/>
        <end position="216"/>
    </location>
</feature>
<feature type="transmembrane region" description="Helical" evidence="1">
    <location>
        <begin position="249"/>
        <end position="269"/>
    </location>
</feature>
<feature type="transmembrane region" description="Helical" evidence="1">
    <location>
        <begin position="284"/>
        <end position="304"/>
    </location>
</feature>
<feature type="transmembrane region" description="Helical" evidence="1">
    <location>
        <begin position="322"/>
        <end position="342"/>
    </location>
</feature>
<protein>
    <recommendedName>
        <fullName>Putative ABC transporter permease protein MJ0876</fullName>
    </recommendedName>
</protein>
<sequence>MNKVGILLILFILSLILPFTALYLAGDTHLITVKDIINFLLKGTTGNEFKDIIIKDVRLPPIIGAVLIGLTISVAGLMLQTLFRNLLASPYTTGISSGVLMVVALVIFIDSLSHLFEIFGEKSILVAGWCGGIFSMILLIIIALRVREANGVIIVALLLSYFFMGLRAYLIANAEELKIQEYWGFTIGSLSKITLGDVIPMTICSIIFIIGVMFLIKSLNALLFGEQYAKSFGLDIKKTRLLVLFFASFITGAIIPYVGLIAFIGIIAPYLARPLIKTSDHRYLVPATMFLGVILMVSCHILSLKYYLPIHYLYGINRPASPLPIGAVLDILGGMLVVYLVYKGEKKIKID</sequence>
<evidence type="ECO:0000255" key="1"/>
<evidence type="ECO:0000305" key="2"/>
<keyword id="KW-1003">Cell membrane</keyword>
<keyword id="KW-0472">Membrane</keyword>
<keyword id="KW-1185">Reference proteome</keyword>
<keyword id="KW-0812">Transmembrane</keyword>
<keyword id="KW-1133">Transmembrane helix</keyword>
<keyword id="KW-0813">Transport</keyword>
<accession>Q58286</accession>
<name>Y876_METJA</name>